<protein>
    <recommendedName>
        <fullName>Interleukin-15</fullName>
        <shortName>IL-15</shortName>
    </recommendedName>
</protein>
<accession>P48092</accession>
<proteinExistence type="evidence at transcript level"/>
<evidence type="ECO:0000250" key="1"/>
<evidence type="ECO:0000250" key="2">
    <source>
        <dbReference type="UniProtKB" id="P40933"/>
    </source>
</evidence>
<evidence type="ECO:0000250" key="3">
    <source>
        <dbReference type="UniProtKB" id="P48346"/>
    </source>
</evidence>
<evidence type="ECO:0000255" key="4"/>
<evidence type="ECO:0000305" key="5"/>
<reference key="1">
    <citation type="journal article" date="1995" name="J. Immunol.">
        <title>Comparative sequence analysis of cytokine genes from human and nonhuman primates.</title>
        <authorList>
            <person name="Villinger F.J."/>
            <person name="Brar S.S."/>
            <person name="Mayne A.E."/>
            <person name="Chikkala N."/>
            <person name="Ansari A.A."/>
        </authorList>
    </citation>
    <scope>NUCLEOTIDE SEQUENCE [MRNA]</scope>
    <source>
        <tissue>Blood</tissue>
    </source>
</reference>
<reference key="2">
    <citation type="submission" date="1997-01" db="EMBL/GenBank/DDBJ databases">
        <title>Molecular cloning and expression of cynomolgus monkey interleukin-15.</title>
        <authorList>
            <person name="Tatsumi M."/>
        </authorList>
    </citation>
    <scope>NUCLEOTIDE SEQUENCE [MRNA]</scope>
</reference>
<organism>
    <name type="scientific">Macaca mulatta</name>
    <name type="common">Rhesus macaque</name>
    <dbReference type="NCBI Taxonomy" id="9544"/>
    <lineage>
        <taxon>Eukaryota</taxon>
        <taxon>Metazoa</taxon>
        <taxon>Chordata</taxon>
        <taxon>Craniata</taxon>
        <taxon>Vertebrata</taxon>
        <taxon>Euteleostomi</taxon>
        <taxon>Mammalia</taxon>
        <taxon>Eutheria</taxon>
        <taxon>Euarchontoglires</taxon>
        <taxon>Primates</taxon>
        <taxon>Haplorrhini</taxon>
        <taxon>Catarrhini</taxon>
        <taxon>Cercopithecidae</taxon>
        <taxon>Cercopithecinae</taxon>
        <taxon>Macaca</taxon>
    </lineage>
</organism>
<dbReference type="EMBL" id="U19843">
    <property type="protein sequence ID" value="AAB60398.1"/>
    <property type="molecule type" value="mRNA"/>
</dbReference>
<dbReference type="EMBL" id="AB000555">
    <property type="protein sequence ID" value="BAA19149.1"/>
    <property type="molecule type" value="mRNA"/>
</dbReference>
<dbReference type="RefSeq" id="NP_001038196.1">
    <property type="nucleotide sequence ID" value="NM_001044731.1"/>
</dbReference>
<dbReference type="RefSeq" id="XP_014994714.1">
    <property type="nucleotide sequence ID" value="XM_015139228.2"/>
</dbReference>
<dbReference type="RefSeq" id="XP_014994715.1">
    <property type="nucleotide sequence ID" value="XM_015139229.2"/>
</dbReference>
<dbReference type="SMR" id="P48092"/>
<dbReference type="FunCoup" id="P48092">
    <property type="interactions" value="1015"/>
</dbReference>
<dbReference type="STRING" id="9544.ENSMMUP00000025102"/>
<dbReference type="GlyCosmos" id="P48092">
    <property type="glycosylation" value="1 site, No reported glycans"/>
</dbReference>
<dbReference type="PaxDb" id="9544-ENSMMUP00000025100"/>
<dbReference type="Ensembl" id="ENSMMUT00000026825.4">
    <property type="protein sequence ID" value="ENSMMUP00000025100.3"/>
    <property type="gene ID" value="ENSMMUG00000019092.4"/>
</dbReference>
<dbReference type="GeneID" id="699616"/>
<dbReference type="KEGG" id="mcc:699616"/>
<dbReference type="CTD" id="3600"/>
<dbReference type="VEuPathDB" id="HostDB:ENSMMUG00000019092"/>
<dbReference type="VGNC" id="VGNC:73710">
    <property type="gene designation" value="IL15"/>
</dbReference>
<dbReference type="eggNOG" id="ENOG502SCMF">
    <property type="taxonomic scope" value="Eukaryota"/>
</dbReference>
<dbReference type="GeneTree" id="ENSGT00390000016264"/>
<dbReference type="InParanoid" id="P48092"/>
<dbReference type="OrthoDB" id="8905762at2759"/>
<dbReference type="Proteomes" id="UP000006718">
    <property type="component" value="Chromosome 5"/>
</dbReference>
<dbReference type="Bgee" id="ENSMMUG00000019092">
    <property type="expression patterns" value="Expressed in lung and 19 other cell types or tissues"/>
</dbReference>
<dbReference type="ExpressionAtlas" id="P48092">
    <property type="expression patterns" value="baseline"/>
</dbReference>
<dbReference type="GO" id="GO:0005615">
    <property type="term" value="C:extracellular space"/>
    <property type="evidence" value="ECO:0000318"/>
    <property type="project" value="GO_Central"/>
</dbReference>
<dbReference type="GO" id="GO:0005125">
    <property type="term" value="F:cytokine activity"/>
    <property type="evidence" value="ECO:0000318"/>
    <property type="project" value="GO_Central"/>
</dbReference>
<dbReference type="GO" id="GO:0005126">
    <property type="term" value="F:cytokine receptor binding"/>
    <property type="evidence" value="ECO:0007669"/>
    <property type="project" value="InterPro"/>
</dbReference>
<dbReference type="GO" id="GO:0006955">
    <property type="term" value="P:immune response"/>
    <property type="evidence" value="ECO:0007669"/>
    <property type="project" value="InterPro"/>
</dbReference>
<dbReference type="GO" id="GO:0035723">
    <property type="term" value="P:interleukin-15-mediated signaling pathway"/>
    <property type="evidence" value="ECO:0000250"/>
    <property type="project" value="UniProtKB"/>
</dbReference>
<dbReference type="GO" id="GO:0042119">
    <property type="term" value="P:neutrophil activation"/>
    <property type="evidence" value="ECO:0000250"/>
    <property type="project" value="UniProtKB"/>
</dbReference>
<dbReference type="GO" id="GO:0001819">
    <property type="term" value="P:positive regulation of cytokine production"/>
    <property type="evidence" value="ECO:0000318"/>
    <property type="project" value="GO_Central"/>
</dbReference>
<dbReference type="GO" id="GO:0050778">
    <property type="term" value="P:positive regulation of immune response"/>
    <property type="evidence" value="ECO:0000318"/>
    <property type="project" value="GO_Central"/>
</dbReference>
<dbReference type="GO" id="GO:0050731">
    <property type="term" value="P:positive regulation of peptidyl-tyrosine phosphorylation"/>
    <property type="evidence" value="ECO:0000250"/>
    <property type="project" value="UniProtKB"/>
</dbReference>
<dbReference type="GO" id="GO:0050766">
    <property type="term" value="P:positive regulation of phagocytosis"/>
    <property type="evidence" value="ECO:0000250"/>
    <property type="project" value="UniProtKB"/>
</dbReference>
<dbReference type="GO" id="GO:0042102">
    <property type="term" value="P:positive regulation of T cell proliferation"/>
    <property type="evidence" value="ECO:0000318"/>
    <property type="project" value="GO_Central"/>
</dbReference>
<dbReference type="FunFam" id="1.20.1250.70:FF:000001">
    <property type="entry name" value="Interleukin"/>
    <property type="match status" value="1"/>
</dbReference>
<dbReference type="Gene3D" id="1.20.1250.70">
    <property type="entry name" value="Interleukin-15/Interleukin-21"/>
    <property type="match status" value="1"/>
</dbReference>
<dbReference type="InterPro" id="IPR009079">
    <property type="entry name" value="4_helix_cytokine-like_core"/>
</dbReference>
<dbReference type="InterPro" id="IPR020439">
    <property type="entry name" value="IL-15"/>
</dbReference>
<dbReference type="InterPro" id="IPR003443">
    <property type="entry name" value="IL-15/IL-21_fam"/>
</dbReference>
<dbReference type="InterPro" id="IPR020466">
    <property type="entry name" value="IL-15_mml"/>
</dbReference>
<dbReference type="PANTHER" id="PTHR14356:SF3">
    <property type="entry name" value="INTERLEUKIN-15"/>
    <property type="match status" value="1"/>
</dbReference>
<dbReference type="PANTHER" id="PTHR14356">
    <property type="entry name" value="INTERLEUKIN-15-RELATED"/>
    <property type="match status" value="1"/>
</dbReference>
<dbReference type="Pfam" id="PF02372">
    <property type="entry name" value="IL15"/>
    <property type="match status" value="1"/>
</dbReference>
<dbReference type="PRINTS" id="PR01947">
    <property type="entry name" value="INTLKN15MAML"/>
</dbReference>
<dbReference type="PRINTS" id="PR01930">
    <property type="entry name" value="INTRLEUKIN15"/>
</dbReference>
<dbReference type="SUPFAM" id="SSF47266">
    <property type="entry name" value="4-helical cytokines"/>
    <property type="match status" value="1"/>
</dbReference>
<sequence length="162" mass="18194">MRISKPHLRSVSIQCYLCLLLNSHFLTEAGIHVFILGCFSAGLPKTEANWVNVISDLKKIEDLIQSMHIDATLYTESDVHPSCKVTAMKCFLLELQVISHESGDTDIHDTVENLIILANNILSSNGNITESGCKECEELEEKNIKEFLQSFVHIVQMFINTS</sequence>
<feature type="signal peptide" evidence="4">
    <location>
        <begin position="1"/>
        <end position="29"/>
    </location>
</feature>
<feature type="propeptide" id="PRO_0000015397" evidence="4">
    <location>
        <begin position="30"/>
        <end position="48"/>
    </location>
</feature>
<feature type="chain" id="PRO_0000015398" description="Interleukin-15">
    <location>
        <begin position="49"/>
        <end position="162"/>
    </location>
</feature>
<feature type="glycosylation site" description="N-linked (GlcNAc...) asparagine" evidence="4">
    <location>
        <position position="127"/>
    </location>
</feature>
<feature type="disulfide bond" evidence="1">
    <location>
        <begin position="83"/>
        <end position="133"/>
    </location>
</feature>
<feature type="disulfide bond" evidence="1">
    <location>
        <begin position="90"/>
        <end position="136"/>
    </location>
</feature>
<feature type="sequence variant">
    <original>K</original>
    <variation>T</variation>
    <location>
        <position position="5"/>
    </location>
</feature>
<feature type="sequence variant">
    <original>I</original>
    <variation>T</variation>
    <location>
        <position position="31"/>
    </location>
</feature>
<name>IL15_MACMU</name>
<comment type="function">
    <text evidence="2 3">Cytokine that plays a major role in the development of inflammatory and protective immune responses to microbial invaders and parasites by modulating immune cells of both the innate and adaptive immune systems. Stimulates the proliferation of natural killer cells, T-cells and B-cells and promotes the secretion of several cytokines. In monocytes, induces the production of IL8 and monocyte chemotactic protein 1/CCL2, two chemokines that attract neutrophils and monocytes respectively to sites of infection. Unlike most cytokines, which are secreted in soluble form, IL15 is expressed in association with its high affinity IL15RA on the surface of IL15-producing cells and delivers signals to target cells that express IL2RB and IL2RG receptor subunits. Binding to its receptor triggers the phosphorylation of JAK1 and JAK3 and the recruitment and subsequent phosphorylation of signal transducer and activator of transcription-3/STAT3 and STAT5 (By similarity). In mast cells, induces the rapid tyrosine phosphorylation of STAT6 and thereby controls mast cell survival and release of cytokines such as IL4 (By similarity).</text>
</comment>
<comment type="subcellular location">
    <subcellularLocation>
        <location>Secreted</location>
    </subcellularLocation>
</comment>
<comment type="similarity">
    <text evidence="5">Belongs to the IL-15/IL-21 family.</text>
</comment>
<keyword id="KW-0202">Cytokine</keyword>
<keyword id="KW-1015">Disulfide bond</keyword>
<keyword id="KW-0325">Glycoprotein</keyword>
<keyword id="KW-1185">Reference proteome</keyword>
<keyword id="KW-0964">Secreted</keyword>
<keyword id="KW-0732">Signal</keyword>
<gene>
    <name type="primary">IL15</name>
</gene>